<dbReference type="EMBL" id="AP006070">
    <property type="protein sequence ID" value="BAD34267.1"/>
    <property type="molecule type" value="Genomic_DNA"/>
</dbReference>
<dbReference type="EMBL" id="AP006161">
    <property type="protein sequence ID" value="BAD29562.1"/>
    <property type="molecule type" value="Genomic_DNA"/>
</dbReference>
<dbReference type="EMBL" id="AP014958">
    <property type="protein sequence ID" value="BAS79400.1"/>
    <property type="molecule type" value="Genomic_DNA"/>
</dbReference>
<dbReference type="EMBL" id="CM000139">
    <property type="protein sequence ID" value="EEE57248.1"/>
    <property type="status" value="ALT_INIT"/>
    <property type="molecule type" value="Genomic_DNA"/>
</dbReference>
<dbReference type="STRING" id="39947.Q6EP58"/>
<dbReference type="PaxDb" id="39947-Q6EP58"/>
<dbReference type="EnsemblPlants" id="Os02t0578366-00">
    <property type="protein sequence ID" value="Os02t0578366-00"/>
    <property type="gene ID" value="Os02g0578366"/>
</dbReference>
<dbReference type="GeneID" id="107275846"/>
<dbReference type="Gramene" id="Os02t0578366-00">
    <property type="protein sequence ID" value="Os02t0578366-00"/>
    <property type="gene ID" value="Os02g0578366"/>
</dbReference>
<dbReference type="KEGG" id="osa:107275846"/>
<dbReference type="eggNOG" id="ENOG502RXTK">
    <property type="taxonomic scope" value="Eukaryota"/>
</dbReference>
<dbReference type="HOGENOM" id="CLU_066104_3_2_1"/>
<dbReference type="InParanoid" id="Q6EP58"/>
<dbReference type="OMA" id="VNWFAIC"/>
<dbReference type="OrthoDB" id="753675at2759"/>
<dbReference type="Proteomes" id="UP000000763">
    <property type="component" value="Chromosome 2"/>
</dbReference>
<dbReference type="Proteomes" id="UP000007752">
    <property type="component" value="Chromosome 2"/>
</dbReference>
<dbReference type="Proteomes" id="UP000059680">
    <property type="component" value="Chromosome 2"/>
</dbReference>
<dbReference type="GO" id="GO:0005886">
    <property type="term" value="C:plasma membrane"/>
    <property type="evidence" value="ECO:0000318"/>
    <property type="project" value="GO_Central"/>
</dbReference>
<dbReference type="GO" id="GO:0071555">
    <property type="term" value="P:cell wall organization"/>
    <property type="evidence" value="ECO:0007669"/>
    <property type="project" value="UniProtKB-KW"/>
</dbReference>
<dbReference type="InterPro" id="IPR006459">
    <property type="entry name" value="CASP/CASPL"/>
</dbReference>
<dbReference type="InterPro" id="IPR006702">
    <property type="entry name" value="CASP_dom"/>
</dbReference>
<dbReference type="InterPro" id="IPR044173">
    <property type="entry name" value="CASPL"/>
</dbReference>
<dbReference type="NCBIfam" id="TIGR01569">
    <property type="entry name" value="A_tha_TIGR01569"/>
    <property type="match status" value="1"/>
</dbReference>
<dbReference type="PANTHER" id="PTHR36488:SF12">
    <property type="entry name" value="CASP-LIKE PROTEIN"/>
    <property type="match status" value="1"/>
</dbReference>
<dbReference type="PANTHER" id="PTHR36488">
    <property type="entry name" value="CASP-LIKE PROTEIN 1U1"/>
    <property type="match status" value="1"/>
</dbReference>
<dbReference type="Pfam" id="PF04535">
    <property type="entry name" value="CASP_dom"/>
    <property type="match status" value="1"/>
</dbReference>
<gene>
    <name type="ordered locus">Os02g0578366</name>
    <name type="ordered locus">LOC_Os02g36845</name>
    <name type="ORF">B1267B06.3</name>
    <name type="ORF">B1342F01.34</name>
    <name type="ORF">OsJ_07255</name>
</gene>
<feature type="chain" id="PRO_0000370291" description="Casparian strip membrane protein 7">
    <location>
        <begin position="1"/>
        <end position="201"/>
    </location>
</feature>
<feature type="topological domain" description="Cytoplasmic" evidence="2">
    <location>
        <begin position="1"/>
        <end position="34"/>
    </location>
</feature>
<feature type="transmembrane region" description="Helical" evidence="2">
    <location>
        <begin position="35"/>
        <end position="55"/>
    </location>
</feature>
<feature type="topological domain" description="Extracellular" evidence="2">
    <location>
        <begin position="56"/>
        <end position="86"/>
    </location>
</feature>
<feature type="transmembrane region" description="Helical" evidence="2">
    <location>
        <begin position="87"/>
        <end position="107"/>
    </location>
</feature>
<feature type="topological domain" description="Cytoplasmic" evidence="2">
    <location>
        <begin position="108"/>
        <end position="128"/>
    </location>
</feature>
<feature type="transmembrane region" description="Helical" evidence="2">
    <location>
        <begin position="129"/>
        <end position="149"/>
    </location>
</feature>
<feature type="topological domain" description="Extracellular" evidence="2">
    <location>
        <begin position="150"/>
        <end position="171"/>
    </location>
</feature>
<feature type="transmembrane region" description="Helical" evidence="2">
    <location>
        <begin position="172"/>
        <end position="192"/>
    </location>
</feature>
<feature type="topological domain" description="Cytoplasmic" evidence="2">
    <location>
        <begin position="193"/>
        <end position="201"/>
    </location>
</feature>
<feature type="region of interest" description="Disordered" evidence="3">
    <location>
        <begin position="1"/>
        <end position="26"/>
    </location>
</feature>
<feature type="compositionally biased region" description="Acidic residues" evidence="3">
    <location>
        <begin position="1"/>
        <end position="11"/>
    </location>
</feature>
<proteinExistence type="inferred from homology"/>
<evidence type="ECO:0000250" key="1"/>
<evidence type="ECO:0000255" key="2"/>
<evidence type="ECO:0000256" key="3">
    <source>
        <dbReference type="SAM" id="MobiDB-lite"/>
    </source>
</evidence>
<evidence type="ECO:0000305" key="4"/>
<keyword id="KW-1003">Cell membrane</keyword>
<keyword id="KW-0961">Cell wall biogenesis/degradation</keyword>
<keyword id="KW-0472">Membrane</keyword>
<keyword id="KW-1185">Reference proteome</keyword>
<keyword id="KW-0812">Transmembrane</keyword>
<keyword id="KW-1133">Transmembrane helix</keyword>
<organism>
    <name type="scientific">Oryza sativa subsp. japonica</name>
    <name type="common">Rice</name>
    <dbReference type="NCBI Taxonomy" id="39947"/>
    <lineage>
        <taxon>Eukaryota</taxon>
        <taxon>Viridiplantae</taxon>
        <taxon>Streptophyta</taxon>
        <taxon>Embryophyta</taxon>
        <taxon>Tracheophyta</taxon>
        <taxon>Spermatophyta</taxon>
        <taxon>Magnoliopsida</taxon>
        <taxon>Liliopsida</taxon>
        <taxon>Poales</taxon>
        <taxon>Poaceae</taxon>
        <taxon>BOP clade</taxon>
        <taxon>Oryzoideae</taxon>
        <taxon>Oryzeae</taxon>
        <taxon>Oryzinae</taxon>
        <taxon>Oryza</taxon>
        <taxon>Oryza sativa</taxon>
    </lineage>
</organism>
<accession>Q6EP58</accession>
<accession>A0A0P0VKU4</accession>
<accession>B9F0Q6</accession>
<protein>
    <recommendedName>
        <fullName>Casparian strip membrane protein 7</fullName>
        <shortName>OsCASP7</shortName>
    </recommendedName>
</protein>
<comment type="function">
    <text evidence="1">Regulates membrane-cell wall junctions and localized cell wall deposition. Required for establishment of the Casparian strip membrane domain (CSD) and the subsequent formation of Casparian strips, a cell wall modification of the root endodermis that determines an apoplastic barrier between the intraorganismal apoplasm and the extraorganismal apoplasm and prevents lateral diffusion (By similarity).</text>
</comment>
<comment type="subunit">
    <text evidence="1">Homodimer and heterodimers.</text>
</comment>
<comment type="subcellular location">
    <subcellularLocation>
        <location evidence="1">Cell membrane</location>
        <topology evidence="1">Multi-pass membrane protein</topology>
    </subcellularLocation>
    <text evidence="1">Very restricted localization following a belt shape within the plasma membrane which coincides with the position of the Casparian strip membrane domain in the root endodermis.</text>
</comment>
<comment type="similarity">
    <text evidence="4">Belongs to the Casparian strip membrane proteins (CASP) family.</text>
</comment>
<comment type="sequence caution" evidence="4">
    <conflict type="erroneous initiation">
        <sequence resource="EMBL-CDS" id="EEE57248"/>
    </conflict>
    <text>Extended N-terminus.</text>
</comment>
<name>CASP7_ORYSJ</name>
<reference key="1">
    <citation type="journal article" date="2005" name="Nature">
        <title>The map-based sequence of the rice genome.</title>
        <authorList>
            <consortium name="International rice genome sequencing project (IRGSP)"/>
        </authorList>
    </citation>
    <scope>NUCLEOTIDE SEQUENCE [LARGE SCALE GENOMIC DNA]</scope>
    <source>
        <strain>cv. Nipponbare</strain>
    </source>
</reference>
<reference key="2">
    <citation type="journal article" date="2013" name="Rice">
        <title>Improvement of the Oryza sativa Nipponbare reference genome using next generation sequence and optical map data.</title>
        <authorList>
            <person name="Kawahara Y."/>
            <person name="de la Bastide M."/>
            <person name="Hamilton J.P."/>
            <person name="Kanamori H."/>
            <person name="McCombie W.R."/>
            <person name="Ouyang S."/>
            <person name="Schwartz D.C."/>
            <person name="Tanaka T."/>
            <person name="Wu J."/>
            <person name="Zhou S."/>
            <person name="Childs K.L."/>
            <person name="Davidson R.M."/>
            <person name="Lin H."/>
            <person name="Quesada-Ocampo L."/>
            <person name="Vaillancourt B."/>
            <person name="Sakai H."/>
            <person name="Lee S.S."/>
            <person name="Kim J."/>
            <person name="Numa H."/>
            <person name="Itoh T."/>
            <person name="Buell C.R."/>
            <person name="Matsumoto T."/>
        </authorList>
    </citation>
    <scope>GENOME REANNOTATION</scope>
    <source>
        <strain>cv. Nipponbare</strain>
    </source>
</reference>
<reference key="3">
    <citation type="journal article" date="2005" name="PLoS Biol.">
        <title>The genomes of Oryza sativa: a history of duplications.</title>
        <authorList>
            <person name="Yu J."/>
            <person name="Wang J."/>
            <person name="Lin W."/>
            <person name="Li S."/>
            <person name="Li H."/>
            <person name="Zhou J."/>
            <person name="Ni P."/>
            <person name="Dong W."/>
            <person name="Hu S."/>
            <person name="Zeng C."/>
            <person name="Zhang J."/>
            <person name="Zhang Y."/>
            <person name="Li R."/>
            <person name="Xu Z."/>
            <person name="Li S."/>
            <person name="Li X."/>
            <person name="Zheng H."/>
            <person name="Cong L."/>
            <person name="Lin L."/>
            <person name="Yin J."/>
            <person name="Geng J."/>
            <person name="Li G."/>
            <person name="Shi J."/>
            <person name="Liu J."/>
            <person name="Lv H."/>
            <person name="Li J."/>
            <person name="Wang J."/>
            <person name="Deng Y."/>
            <person name="Ran L."/>
            <person name="Shi X."/>
            <person name="Wang X."/>
            <person name="Wu Q."/>
            <person name="Li C."/>
            <person name="Ren X."/>
            <person name="Wang J."/>
            <person name="Wang X."/>
            <person name="Li D."/>
            <person name="Liu D."/>
            <person name="Zhang X."/>
            <person name="Ji Z."/>
            <person name="Zhao W."/>
            <person name="Sun Y."/>
            <person name="Zhang Z."/>
            <person name="Bao J."/>
            <person name="Han Y."/>
            <person name="Dong L."/>
            <person name="Ji J."/>
            <person name="Chen P."/>
            <person name="Wu S."/>
            <person name="Liu J."/>
            <person name="Xiao Y."/>
            <person name="Bu D."/>
            <person name="Tan J."/>
            <person name="Yang L."/>
            <person name="Ye C."/>
            <person name="Zhang J."/>
            <person name="Xu J."/>
            <person name="Zhou Y."/>
            <person name="Yu Y."/>
            <person name="Zhang B."/>
            <person name="Zhuang S."/>
            <person name="Wei H."/>
            <person name="Liu B."/>
            <person name="Lei M."/>
            <person name="Yu H."/>
            <person name="Li Y."/>
            <person name="Xu H."/>
            <person name="Wei S."/>
            <person name="He X."/>
            <person name="Fang L."/>
            <person name="Zhang Z."/>
            <person name="Zhang Y."/>
            <person name="Huang X."/>
            <person name="Su Z."/>
            <person name="Tong W."/>
            <person name="Li J."/>
            <person name="Tong Z."/>
            <person name="Li S."/>
            <person name="Ye J."/>
            <person name="Wang L."/>
            <person name="Fang L."/>
            <person name="Lei T."/>
            <person name="Chen C.-S."/>
            <person name="Chen H.-C."/>
            <person name="Xu Z."/>
            <person name="Li H."/>
            <person name="Huang H."/>
            <person name="Zhang F."/>
            <person name="Xu H."/>
            <person name="Li N."/>
            <person name="Zhao C."/>
            <person name="Li S."/>
            <person name="Dong L."/>
            <person name="Huang Y."/>
            <person name="Li L."/>
            <person name="Xi Y."/>
            <person name="Qi Q."/>
            <person name="Li W."/>
            <person name="Zhang B."/>
            <person name="Hu W."/>
            <person name="Zhang Y."/>
            <person name="Tian X."/>
            <person name="Jiao Y."/>
            <person name="Liang X."/>
            <person name="Jin J."/>
            <person name="Gao L."/>
            <person name="Zheng W."/>
            <person name="Hao B."/>
            <person name="Liu S.-M."/>
            <person name="Wang W."/>
            <person name="Yuan L."/>
            <person name="Cao M."/>
            <person name="McDermott J."/>
            <person name="Samudrala R."/>
            <person name="Wang J."/>
            <person name="Wong G.K.-S."/>
            <person name="Yang H."/>
        </authorList>
    </citation>
    <scope>NUCLEOTIDE SEQUENCE [LARGE SCALE GENOMIC DNA]</scope>
    <source>
        <strain>cv. Nipponbare</strain>
    </source>
</reference>
<reference key="4">
    <citation type="journal article" date="2014" name="Plant Physiol.">
        <title>Functional and evolutionary analysis of the CASPARIAN STRIP MEMBRANE DOMAIN PROTEIN family.</title>
        <authorList>
            <person name="Roppolo D."/>
            <person name="Boeckmann B."/>
            <person name="Pfister A."/>
            <person name="Boutet E."/>
            <person name="Rubio M.C."/>
            <person name="Denervaud-Tendon V."/>
            <person name="Vermeer J.E."/>
            <person name="Gheyselinck J."/>
            <person name="Xenarios I."/>
            <person name="Geldner N."/>
        </authorList>
    </citation>
    <scope>GENE FAMILY</scope>
    <scope>NOMENCLATURE</scope>
</reference>
<sequence length="201" mass="21030">MEAGEEIEDGEPSTPTYKAHHPPPHLPPPMRSSGVSLVLSVADLVLRFVAIGGTAGSAIAMATTSETLPFAAPFVRFRAEYSDLPTLMFFVVASSVVCAYLVLSLPASVVHVVRPGARSSRAILAFLDTVMLALLTASASAAAAIVYLAHRGSARANWLGICQQFTSFCQRITASLVGSFAAAVVLVALVFLSALSLARRA</sequence>